<organism>
    <name type="scientific">Mycobacterium sp. (strain JLS)</name>
    <dbReference type="NCBI Taxonomy" id="164757"/>
    <lineage>
        <taxon>Bacteria</taxon>
        <taxon>Bacillati</taxon>
        <taxon>Actinomycetota</taxon>
        <taxon>Actinomycetes</taxon>
        <taxon>Mycobacteriales</taxon>
        <taxon>Mycobacteriaceae</taxon>
        <taxon>Mycobacterium</taxon>
    </lineage>
</organism>
<proteinExistence type="inferred from homology"/>
<gene>
    <name evidence="1" type="primary">rplT</name>
    <name type="ordered locus">Mjls_2994</name>
</gene>
<dbReference type="EMBL" id="CP000580">
    <property type="protein sequence ID" value="ABN98773.1"/>
    <property type="molecule type" value="Genomic_DNA"/>
</dbReference>
<dbReference type="SMR" id="A3Q0U6"/>
<dbReference type="KEGG" id="mjl:Mjls_2994"/>
<dbReference type="HOGENOM" id="CLU_123265_0_0_11"/>
<dbReference type="BioCyc" id="MSP164757:G1G8C-3017-MONOMER"/>
<dbReference type="GO" id="GO:1990904">
    <property type="term" value="C:ribonucleoprotein complex"/>
    <property type="evidence" value="ECO:0007669"/>
    <property type="project" value="UniProtKB-KW"/>
</dbReference>
<dbReference type="GO" id="GO:0005840">
    <property type="term" value="C:ribosome"/>
    <property type="evidence" value="ECO:0007669"/>
    <property type="project" value="UniProtKB-KW"/>
</dbReference>
<dbReference type="GO" id="GO:0019843">
    <property type="term" value="F:rRNA binding"/>
    <property type="evidence" value="ECO:0007669"/>
    <property type="project" value="UniProtKB-UniRule"/>
</dbReference>
<dbReference type="GO" id="GO:0003735">
    <property type="term" value="F:structural constituent of ribosome"/>
    <property type="evidence" value="ECO:0007669"/>
    <property type="project" value="InterPro"/>
</dbReference>
<dbReference type="GO" id="GO:0000027">
    <property type="term" value="P:ribosomal large subunit assembly"/>
    <property type="evidence" value="ECO:0007669"/>
    <property type="project" value="UniProtKB-UniRule"/>
</dbReference>
<dbReference type="GO" id="GO:0006412">
    <property type="term" value="P:translation"/>
    <property type="evidence" value="ECO:0007669"/>
    <property type="project" value="InterPro"/>
</dbReference>
<dbReference type="CDD" id="cd07026">
    <property type="entry name" value="Ribosomal_L20"/>
    <property type="match status" value="1"/>
</dbReference>
<dbReference type="FunFam" id="1.10.1900.20:FF:000001">
    <property type="entry name" value="50S ribosomal protein L20"/>
    <property type="match status" value="1"/>
</dbReference>
<dbReference type="Gene3D" id="6.10.160.10">
    <property type="match status" value="1"/>
</dbReference>
<dbReference type="Gene3D" id="1.10.1900.20">
    <property type="entry name" value="Ribosomal protein L20"/>
    <property type="match status" value="1"/>
</dbReference>
<dbReference type="HAMAP" id="MF_00382">
    <property type="entry name" value="Ribosomal_bL20"/>
    <property type="match status" value="1"/>
</dbReference>
<dbReference type="InterPro" id="IPR005813">
    <property type="entry name" value="Ribosomal_bL20"/>
</dbReference>
<dbReference type="InterPro" id="IPR049946">
    <property type="entry name" value="RIBOSOMAL_L20_CS"/>
</dbReference>
<dbReference type="InterPro" id="IPR035566">
    <property type="entry name" value="Ribosomal_protein_bL20_C"/>
</dbReference>
<dbReference type="NCBIfam" id="TIGR01032">
    <property type="entry name" value="rplT_bact"/>
    <property type="match status" value="1"/>
</dbReference>
<dbReference type="PANTHER" id="PTHR10986">
    <property type="entry name" value="39S RIBOSOMAL PROTEIN L20"/>
    <property type="match status" value="1"/>
</dbReference>
<dbReference type="Pfam" id="PF00453">
    <property type="entry name" value="Ribosomal_L20"/>
    <property type="match status" value="1"/>
</dbReference>
<dbReference type="PRINTS" id="PR00062">
    <property type="entry name" value="RIBOSOMALL20"/>
</dbReference>
<dbReference type="SUPFAM" id="SSF74731">
    <property type="entry name" value="Ribosomal protein L20"/>
    <property type="match status" value="1"/>
</dbReference>
<dbReference type="PROSITE" id="PS00937">
    <property type="entry name" value="RIBOSOMAL_L20"/>
    <property type="match status" value="1"/>
</dbReference>
<evidence type="ECO:0000255" key="1">
    <source>
        <dbReference type="HAMAP-Rule" id="MF_00382"/>
    </source>
</evidence>
<evidence type="ECO:0000305" key="2"/>
<sequence>MARVKRAVNAQKKRRTVLKASKGYRGQRSRLYRKAKEQQLHSLTYAYRDRRARKGEFRKLWISRINAAARANDITYNRLIQGLKAAGVEVDRKNLAEIAVSDAAAFTALVEVAKAALPEDVNAPSGEAA</sequence>
<keyword id="KW-0687">Ribonucleoprotein</keyword>
<keyword id="KW-0689">Ribosomal protein</keyword>
<keyword id="KW-0694">RNA-binding</keyword>
<keyword id="KW-0699">rRNA-binding</keyword>
<feature type="chain" id="PRO_1000049013" description="Large ribosomal subunit protein bL20">
    <location>
        <begin position="1"/>
        <end position="129"/>
    </location>
</feature>
<accession>A3Q0U6</accession>
<comment type="function">
    <text evidence="1">Binds directly to 23S ribosomal RNA and is necessary for the in vitro assembly process of the 50S ribosomal subunit. It is not involved in the protein synthesizing functions of that subunit.</text>
</comment>
<comment type="similarity">
    <text evidence="1">Belongs to the bacterial ribosomal protein bL20 family.</text>
</comment>
<protein>
    <recommendedName>
        <fullName evidence="1">Large ribosomal subunit protein bL20</fullName>
    </recommendedName>
    <alternativeName>
        <fullName evidence="2">50S ribosomal protein L20</fullName>
    </alternativeName>
</protein>
<reference key="1">
    <citation type="submission" date="2007-02" db="EMBL/GenBank/DDBJ databases">
        <title>Complete sequence of Mycobacterium sp. JLS.</title>
        <authorList>
            <consortium name="US DOE Joint Genome Institute"/>
            <person name="Copeland A."/>
            <person name="Lucas S."/>
            <person name="Lapidus A."/>
            <person name="Barry K."/>
            <person name="Detter J.C."/>
            <person name="Glavina del Rio T."/>
            <person name="Hammon N."/>
            <person name="Israni S."/>
            <person name="Dalin E."/>
            <person name="Tice H."/>
            <person name="Pitluck S."/>
            <person name="Chain P."/>
            <person name="Malfatti S."/>
            <person name="Shin M."/>
            <person name="Vergez L."/>
            <person name="Schmutz J."/>
            <person name="Larimer F."/>
            <person name="Land M."/>
            <person name="Hauser L."/>
            <person name="Kyrpides N."/>
            <person name="Mikhailova N."/>
            <person name="Miller C.D."/>
            <person name="Anderson A.J."/>
            <person name="Sims R.C."/>
            <person name="Richardson P."/>
        </authorList>
    </citation>
    <scope>NUCLEOTIDE SEQUENCE [LARGE SCALE GENOMIC DNA]</scope>
    <source>
        <strain>JLS</strain>
    </source>
</reference>
<name>RL20_MYCSJ</name>